<sequence length="1604" mass="181661">MESQQLSQHSPISHGSACASVTSKEVHTNQDPLDVSASKTEECEKASTKANSQQTTTPASSAVPENPHHASPQPASVPPPQNGPYPQQCMMTQNQANPSGWSFYGHPSMIPYTPYQMSPMYFPPGPQSQFPQYPSSVGTPLSTPSPESGNTFTDSSSADSDMTSTKKYVRPPPMLTSPNDFPNWVKTYIKFLQNSNLGGIIPTVNGKPVRQITDDELTFLYNTFQIFAPSQFLPTWVKDILSVDYTDIMKILSKSIEKMQSDTQEANDIVTLANLQYNGSTPADAFETKVTNIIDRLNNNGIHINNKVACQLIMRGLSGEYKFLRYTRHRHLNMTVAELFLDIHAIYEEQQGSRNSKPNYRRNPSDEKNDSRSYTNTTKPKVIARNPQKTNNSKSKTARAHNVSTSNNSPSTDNDSISKSTTEPIQLNNKHDLHLGQKLTESTVNHTNHSDDELPGHLLLDSGASRTLIRSAHHIHSASSNPDINVVDAQKRNIPINAIGDLQFHFQDNTKTSIKVLHTPNIAYDLLSLNELAAVDITACFTKNVLERSDGTVLAPIVKYGDFYWVSKKYLLPSNISVPTINNVHTSESTRKYPYPFIHRMLAHANAQTIRYSLKNNTITYFNESDVDWSSAIDYQCPDCLIGKSTKHRHIKGSRLKYQNSYEPFQYLHTDIFGPVHNLPNSAPSYFISFTDETTKFRWVYPLHDRREDSILDVFTTILAFIKNQFQASVLVIQMDRGSEYTNRTLHKFLEKNGITPCYTTTADSRAHGVAERLNRTLLDDCRTQLQCSGLPNHLWFSAIEFSTIVRNSLASPKSKKSARQHAGLAGLDISTLLPFGQPVIVNDHNPNSKIHPRGIPGYALHPSRNSYGYIIYLPSLKKTVDTTNYVILQGKESRLDQFNYDALTFDEDLNRLTASYHSFIASNEIQESNDLNIESDHDFQSDIELHPEQPRNVLSKAVSPTDSTPPSTHTEDSKRVSKTNIRAPREVDPNISESNILPSKKRSSTPQISNIESTGSGGMHKLNVPLLAPMSQSNTHESSHASKSKDFRHSDSYSENETNHTNVPISSTGGTNNKTVPQISDQETEKRIIHRSPSIDASPPENNSSHNIVPIKTPTTVSEQNTEESIIADLPLPDLPPESPTEFPDPFKELPPINSRQTNSSLGGIGDSNAYTTINSKKRSLEDNETEIKVSRDTWNTKNMRSLEPPRSKKRIHLIAAVKAVKSIKPIRTTLRYDEAITYNKDIKEKEKYIEAYHKEVNQLLKMKTWDTDEYYDRKEIDPKRVINSMFIFNKKRDGTHKARFVARGDIQHPDTYDSGMQSNTVHHYALMTSLSLALDNNYYITQLDISSAYLYADIKEELYIRPPPHLGMNDKLIRLKKSLYGLKQSGANWYETIKSYLIQQCGMEEVRGWSCVFKNSQVTICLFVDDMVLFSKNLNSNKRIIEKLKMQYDTKIINLGESDEEIQYDILGLEIKYQRGKYMKLGMENSLTEKIPKLNVPLNPKGRKLSAPGQPGLYIDQDELEIDEDEYKEKVHEMQKLIGLASYVGYKFRFDLLYYINTLAQHILFPSRQVLDMTYELIQFMWDTRDKQLIWHKHKTSSDKNI</sequence>
<reference key="1">
    <citation type="journal article" date="1997" name="Nature">
        <title>The nucleotide sequence of Saccharomyces cerevisiae chromosome IV.</title>
        <authorList>
            <person name="Jacq C."/>
            <person name="Alt-Moerbe J."/>
            <person name="Andre B."/>
            <person name="Arnold W."/>
            <person name="Bahr A."/>
            <person name="Ballesta J.P.G."/>
            <person name="Bargues M."/>
            <person name="Baron L."/>
            <person name="Becker A."/>
            <person name="Biteau N."/>
            <person name="Bloecker H."/>
            <person name="Blugeon C."/>
            <person name="Boskovic J."/>
            <person name="Brandt P."/>
            <person name="Brueckner M."/>
            <person name="Buitrago M.J."/>
            <person name="Coster F."/>
            <person name="Delaveau T."/>
            <person name="del Rey F."/>
            <person name="Dujon B."/>
            <person name="Eide L.G."/>
            <person name="Garcia-Cantalejo J.M."/>
            <person name="Goffeau A."/>
            <person name="Gomez-Peris A."/>
            <person name="Granotier C."/>
            <person name="Hanemann V."/>
            <person name="Hankeln T."/>
            <person name="Hoheisel J.D."/>
            <person name="Jaeger W."/>
            <person name="Jimenez A."/>
            <person name="Jonniaux J.-L."/>
            <person name="Kraemer C."/>
            <person name="Kuester H."/>
            <person name="Laamanen P."/>
            <person name="Legros Y."/>
            <person name="Louis E.J."/>
            <person name="Moeller-Rieker S."/>
            <person name="Monnet A."/>
            <person name="Moro M."/>
            <person name="Mueller-Auer S."/>
            <person name="Nussbaumer B."/>
            <person name="Paricio N."/>
            <person name="Paulin L."/>
            <person name="Perea J."/>
            <person name="Perez-Alonso M."/>
            <person name="Perez-Ortin J.E."/>
            <person name="Pohl T.M."/>
            <person name="Prydz H."/>
            <person name="Purnelle B."/>
            <person name="Rasmussen S.W."/>
            <person name="Remacha M.A."/>
            <person name="Revuelta J.L."/>
            <person name="Rieger M."/>
            <person name="Salom D."/>
            <person name="Saluz H.P."/>
            <person name="Saiz J.E."/>
            <person name="Saren A.-M."/>
            <person name="Schaefer M."/>
            <person name="Scharfe M."/>
            <person name="Schmidt E.R."/>
            <person name="Schneider C."/>
            <person name="Scholler P."/>
            <person name="Schwarz S."/>
            <person name="Soler-Mira A."/>
            <person name="Urrestarazu L.A."/>
            <person name="Verhasselt P."/>
            <person name="Vissers S."/>
            <person name="Voet M."/>
            <person name="Volckaert G."/>
            <person name="Wagner G."/>
            <person name="Wambutt R."/>
            <person name="Wedler E."/>
            <person name="Wedler H."/>
            <person name="Woelfl S."/>
            <person name="Harris D.E."/>
            <person name="Bowman S."/>
            <person name="Brown D."/>
            <person name="Churcher C.M."/>
            <person name="Connor R."/>
            <person name="Dedman K."/>
            <person name="Gentles S."/>
            <person name="Hamlin N."/>
            <person name="Hunt S."/>
            <person name="Jones L."/>
            <person name="McDonald S."/>
            <person name="Murphy L.D."/>
            <person name="Niblett D."/>
            <person name="Odell C."/>
            <person name="Oliver K."/>
            <person name="Rajandream M.A."/>
            <person name="Richards C."/>
            <person name="Shore L."/>
            <person name="Walsh S.V."/>
            <person name="Barrell B.G."/>
            <person name="Dietrich F.S."/>
            <person name="Mulligan J.T."/>
            <person name="Allen E."/>
            <person name="Araujo R."/>
            <person name="Aviles E."/>
            <person name="Berno A."/>
            <person name="Carpenter J."/>
            <person name="Chen E."/>
            <person name="Cherry J.M."/>
            <person name="Chung E."/>
            <person name="Duncan M."/>
            <person name="Hunicke-Smith S."/>
            <person name="Hyman R.W."/>
            <person name="Komp C."/>
            <person name="Lashkari D."/>
            <person name="Lew H."/>
            <person name="Lin D."/>
            <person name="Mosedale D."/>
            <person name="Nakahara K."/>
            <person name="Namath A."/>
            <person name="Oefner P."/>
            <person name="Oh C."/>
            <person name="Petel F.X."/>
            <person name="Roberts D."/>
            <person name="Schramm S."/>
            <person name="Schroeder M."/>
            <person name="Shogren T."/>
            <person name="Shroff N."/>
            <person name="Winant A."/>
            <person name="Yelton M.A."/>
            <person name="Botstein D."/>
            <person name="Davis R.W."/>
            <person name="Johnston M."/>
            <person name="Andrews S."/>
            <person name="Brinkman R."/>
            <person name="Cooper J."/>
            <person name="Ding H."/>
            <person name="Du Z."/>
            <person name="Favello A."/>
            <person name="Fulton L."/>
            <person name="Gattung S."/>
            <person name="Greco T."/>
            <person name="Hallsworth K."/>
            <person name="Hawkins J."/>
            <person name="Hillier L.W."/>
            <person name="Jier M."/>
            <person name="Johnson D."/>
            <person name="Johnston L."/>
            <person name="Kirsten J."/>
            <person name="Kucaba T."/>
            <person name="Langston Y."/>
            <person name="Latreille P."/>
            <person name="Le T."/>
            <person name="Mardis E."/>
            <person name="Menezes S."/>
            <person name="Miller N."/>
            <person name="Nhan M."/>
            <person name="Pauley A."/>
            <person name="Peluso D."/>
            <person name="Rifkin L."/>
            <person name="Riles L."/>
            <person name="Taich A."/>
            <person name="Trevaskis E."/>
            <person name="Vignati D."/>
            <person name="Wilcox L."/>
            <person name="Wohldman P."/>
            <person name="Vaudin M."/>
            <person name="Wilson R."/>
            <person name="Waterston R."/>
            <person name="Albermann K."/>
            <person name="Hani J."/>
            <person name="Heumann K."/>
            <person name="Kleine K."/>
            <person name="Mewes H.-W."/>
            <person name="Zollner A."/>
            <person name="Zaccaria P."/>
        </authorList>
    </citation>
    <scope>NUCLEOTIDE SEQUENCE [LARGE SCALE GENOMIC DNA]</scope>
    <source>
        <strain>ATCC 204508 / S288c</strain>
    </source>
</reference>
<reference key="2">
    <citation type="journal article" date="2014" name="G3 (Bethesda)">
        <title>The reference genome sequence of Saccharomyces cerevisiae: Then and now.</title>
        <authorList>
            <person name="Engel S.R."/>
            <person name="Dietrich F.S."/>
            <person name="Fisk D.G."/>
            <person name="Binkley G."/>
            <person name="Balakrishnan R."/>
            <person name="Costanzo M.C."/>
            <person name="Dwight S.S."/>
            <person name="Hitz B.C."/>
            <person name="Karra K."/>
            <person name="Nash R.S."/>
            <person name="Weng S."/>
            <person name="Wong E.D."/>
            <person name="Lloyd P."/>
            <person name="Skrzypek M.S."/>
            <person name="Miyasato S.R."/>
            <person name="Simison M."/>
            <person name="Cherry J.M."/>
        </authorList>
    </citation>
    <scope>GENOME REANNOTATION</scope>
    <source>
        <strain>ATCC 204508 / S288c</strain>
    </source>
</reference>
<reference key="3">
    <citation type="journal article" date="1998" name="Genome Res.">
        <title>Transposable elements and genome organization: a comprehensive survey of retrotransposons revealed by the complete Saccharomyces cerevisiae genome sequence.</title>
        <authorList>
            <person name="Kim J.M."/>
            <person name="Vanguri S."/>
            <person name="Boeke J.D."/>
            <person name="Gabriel A."/>
            <person name="Voytas D.F."/>
        </authorList>
    </citation>
    <scope>NOMENCLATURE</scope>
</reference>
<reference key="4">
    <citation type="journal article" date="2005" name="Cytogenet. Genome Res.">
        <title>Happy together: the life and times of Ty retrotransposons and their hosts.</title>
        <authorList>
            <person name="Lesage P."/>
            <person name="Todeschini A.L."/>
        </authorList>
    </citation>
    <scope>REVIEW</scope>
</reference>
<reference key="5">
    <citation type="journal article" date="2005" name="Cytogenet. Genome Res.">
        <title>Reverse transcriptase and integrase of the Saccharomyces cerevisiae Ty1 element.</title>
        <authorList>
            <person name="Wilhelm F.-X."/>
            <person name="Wilhelm M."/>
            <person name="Gabriel A."/>
        </authorList>
    </citation>
    <scope>REVIEW</scope>
    <scope>DOMAINS</scope>
</reference>
<keyword id="KW-0064">Aspartyl protease</keyword>
<keyword id="KW-0067">ATP-binding</keyword>
<keyword id="KW-0963">Cytoplasm</keyword>
<keyword id="KW-0229">DNA integration</keyword>
<keyword id="KW-0233">DNA recombination</keyword>
<keyword id="KW-0238">DNA-binding</keyword>
<keyword id="KW-0239">DNA-directed DNA polymerase</keyword>
<keyword id="KW-0255">Endonuclease</keyword>
<keyword id="KW-0378">Hydrolase</keyword>
<keyword id="KW-0460">Magnesium</keyword>
<keyword id="KW-0479">Metal-binding</keyword>
<keyword id="KW-0511">Multifunctional enzyme</keyword>
<keyword id="KW-0540">Nuclease</keyword>
<keyword id="KW-0547">Nucleotide-binding</keyword>
<keyword id="KW-0548">Nucleotidyltransferase</keyword>
<keyword id="KW-0539">Nucleus</keyword>
<keyword id="KW-0597">Phosphoprotein</keyword>
<keyword id="KW-0645">Protease</keyword>
<keyword id="KW-1185">Reference proteome</keyword>
<keyword id="KW-0688">Ribosomal frameshifting</keyword>
<keyword id="KW-0694">RNA-binding</keyword>
<keyword id="KW-0695">RNA-directed DNA polymerase</keyword>
<keyword id="KW-0808">Transferase</keyword>
<keyword id="KW-0814">Transposable element</keyword>
<keyword id="KW-0815">Transposition</keyword>
<keyword id="KW-1188">Viral release from host cell</keyword>
<keyword id="KW-0917">Virion maturation</keyword>
<keyword id="KW-0862">Zinc</keyword>
<keyword id="KW-0863">Zinc-finger</keyword>
<gene>
    <name type="primary">TY1B-DR4</name>
    <name type="synonym">YDRCTy1-3 POL</name>
    <name type="ordered locus">YDR261C-D</name>
</gene>
<feature type="chain" id="PRO_0000279017" description="Transposon Ty1-DR4 Gag-Pol polyprotein">
    <location>
        <begin position="1"/>
        <end position="1604"/>
    </location>
</feature>
<feature type="chain" id="PRO_0000279018" description="Capsid protein" evidence="1">
    <location>
        <begin position="1"/>
        <end position="401"/>
    </location>
</feature>
<feature type="chain" id="PRO_0000279019" description="Ty1 protease" evidence="1">
    <location>
        <begin position="402"/>
        <end position="582"/>
    </location>
</feature>
<feature type="chain" id="PRO_0000279020" description="Integrase" evidence="1">
    <location>
        <begin position="583"/>
        <end position="1217"/>
    </location>
</feature>
<feature type="chain" id="PRO_0000279021" description="Reverse transcriptase/ribonuclease H" evidence="1">
    <location>
        <begin position="1218"/>
        <end position="1604"/>
    </location>
</feature>
<feature type="domain" description="Integrase catalytic" evidence="3">
    <location>
        <begin position="660"/>
        <end position="835"/>
    </location>
</feature>
<feature type="domain" description="Reverse transcriptase Ty1/copia-type">
    <location>
        <begin position="1338"/>
        <end position="1476"/>
    </location>
</feature>
<feature type="region of interest" description="Disordered" evidence="5">
    <location>
        <begin position="1"/>
        <end position="93"/>
    </location>
</feature>
<feature type="region of interest" description="Disordered" evidence="5">
    <location>
        <begin position="126"/>
        <end position="174"/>
    </location>
</feature>
<feature type="region of interest" description="RNA-binding" evidence="1">
    <location>
        <begin position="299"/>
        <end position="401"/>
    </location>
</feature>
<feature type="region of interest" description="Disordered" evidence="5">
    <location>
        <begin position="352"/>
        <end position="421"/>
    </location>
</feature>
<feature type="region of interest" description="Integrase-type zinc finger-like">
    <location>
        <begin position="583"/>
        <end position="640"/>
    </location>
</feature>
<feature type="region of interest" description="Disordered" evidence="5">
    <location>
        <begin position="956"/>
        <end position="1087"/>
    </location>
</feature>
<feature type="region of interest" description="Disordered" evidence="5">
    <location>
        <begin position="1092"/>
        <end position="1111"/>
    </location>
</feature>
<feature type="region of interest" description="Disordered" evidence="5">
    <location>
        <begin position="1130"/>
        <end position="1187"/>
    </location>
</feature>
<feature type="short sequence motif" description="Bipartite nuclear localization signal" evidence="1">
    <location>
        <begin position="1178"/>
        <end position="1212"/>
    </location>
</feature>
<feature type="compositionally biased region" description="Polar residues" evidence="5">
    <location>
        <begin position="1"/>
        <end position="23"/>
    </location>
</feature>
<feature type="compositionally biased region" description="Polar residues" evidence="5">
    <location>
        <begin position="48"/>
        <end position="60"/>
    </location>
</feature>
<feature type="compositionally biased region" description="Polar residues" evidence="5">
    <location>
        <begin position="127"/>
        <end position="152"/>
    </location>
</feature>
<feature type="compositionally biased region" description="Low complexity" evidence="5">
    <location>
        <begin position="153"/>
        <end position="165"/>
    </location>
</feature>
<feature type="compositionally biased region" description="Low complexity" evidence="5">
    <location>
        <begin position="402"/>
        <end position="418"/>
    </location>
</feature>
<feature type="compositionally biased region" description="Low complexity" evidence="5">
    <location>
        <begin position="960"/>
        <end position="969"/>
    </location>
</feature>
<feature type="compositionally biased region" description="Polar residues" evidence="5">
    <location>
        <begin position="1005"/>
        <end position="1015"/>
    </location>
</feature>
<feature type="compositionally biased region" description="Basic and acidic residues" evidence="5">
    <location>
        <begin position="1038"/>
        <end position="1053"/>
    </location>
</feature>
<feature type="compositionally biased region" description="Polar residues" evidence="5">
    <location>
        <begin position="1054"/>
        <end position="1082"/>
    </location>
</feature>
<feature type="compositionally biased region" description="Polar residues" evidence="5">
    <location>
        <begin position="1101"/>
        <end position="1111"/>
    </location>
</feature>
<feature type="active site" description="For protease activity; shared with dimeric partner" evidence="4">
    <location>
        <position position="461"/>
    </location>
</feature>
<feature type="binding site" evidence="3">
    <location>
        <position position="671"/>
    </location>
    <ligand>
        <name>Mg(2+)</name>
        <dbReference type="ChEBI" id="CHEBI:18420"/>
        <label>1</label>
        <note>catalytic; for integrase activity</note>
    </ligand>
</feature>
<feature type="binding site" evidence="3">
    <location>
        <position position="736"/>
    </location>
    <ligand>
        <name>Mg(2+)</name>
        <dbReference type="ChEBI" id="CHEBI:18420"/>
        <label>1</label>
        <note>catalytic; for integrase activity</note>
    </ligand>
</feature>
<feature type="binding site" evidence="3">
    <location>
        <position position="1346"/>
    </location>
    <ligand>
        <name>Mg(2+)</name>
        <dbReference type="ChEBI" id="CHEBI:18420"/>
        <label>2</label>
        <note>catalytic; for reverse transcriptase activity</note>
    </ligand>
</feature>
<feature type="binding site" evidence="3">
    <location>
        <position position="1427"/>
    </location>
    <ligand>
        <name>Mg(2+)</name>
        <dbReference type="ChEBI" id="CHEBI:18420"/>
        <label>2</label>
        <note>catalytic; for reverse transcriptase activity</note>
    </ligand>
</feature>
<feature type="binding site" evidence="3">
    <location>
        <position position="1428"/>
    </location>
    <ligand>
        <name>Mg(2+)</name>
        <dbReference type="ChEBI" id="CHEBI:18420"/>
        <label>2</label>
        <note>catalytic; for reverse transcriptase activity</note>
    </ligand>
</feature>
<feature type="site" description="Cleavage; by Ty1 protease" evidence="1">
    <location>
        <begin position="401"/>
        <end position="402"/>
    </location>
</feature>
<feature type="site" description="Cleavage; by Ty1 protease" evidence="1">
    <location>
        <begin position="582"/>
        <end position="583"/>
    </location>
</feature>
<feature type="site" description="Cleavage; by Ty1 protease" evidence="1">
    <location>
        <begin position="1217"/>
        <end position="1218"/>
    </location>
</feature>
<feature type="modified residue" description="Phosphoserine" evidence="2">
    <location>
        <position position="416"/>
    </location>
</feature>
<accession>Q07793</accession>
<accession>D6VSP4</accession>
<protein>
    <recommendedName>
        <fullName>Transposon Ty1-DR4 Gag-Pol polyprotein</fullName>
    </recommendedName>
    <alternativeName>
        <fullName>Gag-Pol-p199</fullName>
    </alternativeName>
    <alternativeName>
        <fullName>TY1A-TY1B</fullName>
    </alternativeName>
    <alternativeName>
        <fullName>Transposon Ty1 TYA-TYB polyprotein</fullName>
    </alternativeName>
    <alternativeName>
        <fullName>p190</fullName>
    </alternativeName>
    <component>
        <recommendedName>
            <fullName>Capsid protein</fullName>
            <shortName>CA</shortName>
        </recommendedName>
        <alternativeName>
            <fullName>Gag-p45</fullName>
        </alternativeName>
        <alternativeName>
            <fullName>p54</fullName>
        </alternativeName>
    </component>
    <component>
        <recommendedName>
            <fullName>Ty1 protease</fullName>
            <shortName>PR</shortName>
            <ecNumber>3.4.23.-</ecNumber>
        </recommendedName>
        <alternativeName>
            <fullName>Pol-p20</fullName>
        </alternativeName>
        <alternativeName>
            <fullName>p23</fullName>
        </alternativeName>
    </component>
    <component>
        <recommendedName>
            <fullName>Integrase</fullName>
            <shortName>IN</shortName>
        </recommendedName>
        <alternativeName>
            <fullName>Pol-p71</fullName>
        </alternativeName>
        <alternativeName>
            <fullName>p84</fullName>
        </alternativeName>
        <alternativeName>
            <fullName>p90</fullName>
        </alternativeName>
    </component>
    <component>
        <recommendedName>
            <fullName>Reverse transcriptase/ribonuclease H</fullName>
            <shortName>RT</shortName>
            <shortName>RT-RH</shortName>
            <ecNumber>2.7.7.49</ecNumber>
            <ecNumber>2.7.7.7</ecNumber>
            <ecNumber>3.1.26.4</ecNumber>
        </recommendedName>
        <alternativeName>
            <fullName>Pol-p63</fullName>
        </alternativeName>
        <alternativeName>
            <fullName>p60</fullName>
        </alternativeName>
    </component>
</protein>
<dbReference type="EC" id="3.4.23.-"/>
<dbReference type="EC" id="2.7.7.49"/>
<dbReference type="EC" id="2.7.7.7"/>
<dbReference type="EC" id="3.1.26.4"/>
<dbReference type="EMBL" id="Z74387">
    <property type="protein sequence ID" value="CAA98912.1"/>
    <property type="molecule type" value="Genomic_DNA"/>
</dbReference>
<dbReference type="EMBL" id="BK006938">
    <property type="protein sequence ID" value="DAA12104.1"/>
    <property type="molecule type" value="Genomic_DNA"/>
</dbReference>
<dbReference type="PIR" id="S70227">
    <property type="entry name" value="S70227"/>
</dbReference>
<dbReference type="RefSeq" id="NP_058148.1">
    <molecule id="Q07793-1"/>
    <property type="nucleotide sequence ID" value="NM_001184421.2"/>
</dbReference>
<dbReference type="SMR" id="Q07793"/>
<dbReference type="BioGRID" id="32315">
    <property type="interactions" value="5"/>
</dbReference>
<dbReference type="FunCoup" id="Q07793">
    <property type="interactions" value="26"/>
</dbReference>
<dbReference type="IntAct" id="Q07793">
    <property type="interactions" value="1"/>
</dbReference>
<dbReference type="GlyGen" id="Q07793">
    <property type="glycosylation" value="3 sites"/>
</dbReference>
<dbReference type="iPTMnet" id="Q07793"/>
<dbReference type="PaxDb" id="4932-YDR261C-D"/>
<dbReference type="PeptideAtlas" id="Q07793"/>
<dbReference type="GeneID" id="851852"/>
<dbReference type="KEGG" id="sce:YDR261C-D"/>
<dbReference type="AGR" id="SGD:S000007395"/>
<dbReference type="SGD" id="S000007395">
    <property type="gene designation" value="YDR261C-D"/>
</dbReference>
<dbReference type="VEuPathDB" id="FungiDB:YDR261C-D"/>
<dbReference type="eggNOG" id="KOG0017">
    <property type="taxonomic scope" value="Eukaryota"/>
</dbReference>
<dbReference type="HOGENOM" id="CLU_244151_0_0_1"/>
<dbReference type="InParanoid" id="Q07793"/>
<dbReference type="OrthoDB" id="5423336at2759"/>
<dbReference type="ChiTaRS" id="YDR261C-D">
    <property type="organism name" value="yeast"/>
</dbReference>
<dbReference type="Proteomes" id="UP000002311">
    <property type="component" value="Chromosome IV"/>
</dbReference>
<dbReference type="RNAct" id="Q07793">
    <property type="molecule type" value="protein"/>
</dbReference>
<dbReference type="GO" id="GO:0005737">
    <property type="term" value="C:cytoplasm"/>
    <property type="evidence" value="ECO:0007669"/>
    <property type="project" value="UniProtKB-SubCell"/>
</dbReference>
<dbReference type="GO" id="GO:0005634">
    <property type="term" value="C:nucleus"/>
    <property type="evidence" value="ECO:0000314"/>
    <property type="project" value="SGD"/>
</dbReference>
<dbReference type="GO" id="GO:0004190">
    <property type="term" value="F:aspartic-type endopeptidase activity"/>
    <property type="evidence" value="ECO:0007669"/>
    <property type="project" value="UniProtKB-KW"/>
</dbReference>
<dbReference type="GO" id="GO:0005524">
    <property type="term" value="F:ATP binding"/>
    <property type="evidence" value="ECO:0007669"/>
    <property type="project" value="UniProtKB-KW"/>
</dbReference>
<dbReference type="GO" id="GO:0003677">
    <property type="term" value="F:DNA binding"/>
    <property type="evidence" value="ECO:0007669"/>
    <property type="project" value="UniProtKB-KW"/>
</dbReference>
<dbReference type="GO" id="GO:0003887">
    <property type="term" value="F:DNA-directed DNA polymerase activity"/>
    <property type="evidence" value="ECO:0007669"/>
    <property type="project" value="UniProtKB-KW"/>
</dbReference>
<dbReference type="GO" id="GO:0003723">
    <property type="term" value="F:RNA binding"/>
    <property type="evidence" value="ECO:0007669"/>
    <property type="project" value="UniProtKB-KW"/>
</dbReference>
<dbReference type="GO" id="GO:0003964">
    <property type="term" value="F:RNA-directed DNA polymerase activity"/>
    <property type="evidence" value="ECO:0007669"/>
    <property type="project" value="UniProtKB-KW"/>
</dbReference>
<dbReference type="GO" id="GO:0004523">
    <property type="term" value="F:RNA-DNA hybrid ribonuclease activity"/>
    <property type="evidence" value="ECO:0007669"/>
    <property type="project" value="UniProtKB-EC"/>
</dbReference>
<dbReference type="GO" id="GO:0008270">
    <property type="term" value="F:zinc ion binding"/>
    <property type="evidence" value="ECO:0007669"/>
    <property type="project" value="UniProtKB-KW"/>
</dbReference>
<dbReference type="GO" id="GO:0015074">
    <property type="term" value="P:DNA integration"/>
    <property type="evidence" value="ECO:0007669"/>
    <property type="project" value="UniProtKB-KW"/>
</dbReference>
<dbReference type="GO" id="GO:0006310">
    <property type="term" value="P:DNA recombination"/>
    <property type="evidence" value="ECO:0007669"/>
    <property type="project" value="UniProtKB-KW"/>
</dbReference>
<dbReference type="GO" id="GO:0006508">
    <property type="term" value="P:proteolysis"/>
    <property type="evidence" value="ECO:0007669"/>
    <property type="project" value="UniProtKB-KW"/>
</dbReference>
<dbReference type="GO" id="GO:0032196">
    <property type="term" value="P:transposition"/>
    <property type="evidence" value="ECO:0007669"/>
    <property type="project" value="UniProtKB-KW"/>
</dbReference>
<dbReference type="GO" id="GO:0075523">
    <property type="term" value="P:viral translational frameshifting"/>
    <property type="evidence" value="ECO:0007669"/>
    <property type="project" value="UniProtKB-KW"/>
</dbReference>
<dbReference type="FunFam" id="3.30.420.10:FF:000050">
    <property type="entry name" value="Transposon Ty2-DR3 Gag-Pol polyprotein"/>
    <property type="match status" value="1"/>
</dbReference>
<dbReference type="Gene3D" id="3.30.420.10">
    <property type="entry name" value="Ribonuclease H-like superfamily/Ribonuclease H"/>
    <property type="match status" value="1"/>
</dbReference>
<dbReference type="InterPro" id="IPR001969">
    <property type="entry name" value="Aspartic_peptidase_AS"/>
</dbReference>
<dbReference type="InterPro" id="IPR043502">
    <property type="entry name" value="DNA/RNA_pol_sf"/>
</dbReference>
<dbReference type="InterPro" id="IPR001584">
    <property type="entry name" value="Integrase_cat-core"/>
</dbReference>
<dbReference type="InterPro" id="IPR039537">
    <property type="entry name" value="Retrotran_Ty1/copia-like"/>
</dbReference>
<dbReference type="InterPro" id="IPR012337">
    <property type="entry name" value="RNaseH-like_sf"/>
</dbReference>
<dbReference type="InterPro" id="IPR036397">
    <property type="entry name" value="RNaseH_sf"/>
</dbReference>
<dbReference type="InterPro" id="IPR013103">
    <property type="entry name" value="RVT_2"/>
</dbReference>
<dbReference type="InterPro" id="IPR015820">
    <property type="entry name" value="TYA"/>
</dbReference>
<dbReference type="PANTHER" id="PTHR42648">
    <property type="entry name" value="TRANSPOSASE, PUTATIVE-RELATED"/>
    <property type="match status" value="1"/>
</dbReference>
<dbReference type="PANTHER" id="PTHR42648:SF11">
    <property type="entry name" value="TRANSPOSON TY4-P GAG-POL POLYPROTEIN"/>
    <property type="match status" value="1"/>
</dbReference>
<dbReference type="Pfam" id="PF00665">
    <property type="entry name" value="rve"/>
    <property type="match status" value="1"/>
</dbReference>
<dbReference type="Pfam" id="PF07727">
    <property type="entry name" value="RVT_2"/>
    <property type="match status" value="1"/>
</dbReference>
<dbReference type="Pfam" id="PF01021">
    <property type="entry name" value="TYA"/>
    <property type="match status" value="1"/>
</dbReference>
<dbReference type="SUPFAM" id="SSF56672">
    <property type="entry name" value="DNA/RNA polymerases"/>
    <property type="match status" value="1"/>
</dbReference>
<dbReference type="SUPFAM" id="SSF53098">
    <property type="entry name" value="Ribonuclease H-like"/>
    <property type="match status" value="1"/>
</dbReference>
<dbReference type="PROSITE" id="PS00141">
    <property type="entry name" value="ASP_PROTEASE"/>
    <property type="match status" value="1"/>
</dbReference>
<dbReference type="PROSITE" id="PS50994">
    <property type="entry name" value="INTEGRASE"/>
    <property type="match status" value="1"/>
</dbReference>
<evidence type="ECO:0000250" key="1"/>
<evidence type="ECO:0000250" key="2">
    <source>
        <dbReference type="UniProtKB" id="Q99231"/>
    </source>
</evidence>
<evidence type="ECO:0000255" key="3">
    <source>
        <dbReference type="PROSITE-ProRule" id="PRU00457"/>
    </source>
</evidence>
<evidence type="ECO:0000255" key="4">
    <source>
        <dbReference type="PROSITE-ProRule" id="PRU10094"/>
    </source>
</evidence>
<evidence type="ECO:0000256" key="5">
    <source>
        <dbReference type="SAM" id="MobiDB-lite"/>
    </source>
</evidence>
<name>YD13B_YEAST</name>
<comment type="function">
    <text evidence="1">Capsid protein (CA) is the structural component of the virus-like particle (VLP), forming the shell that encapsulates the retrotransposons dimeric RNA genome. The particles are assembled from trimer-clustered units and there are holes in the capsid shells that allow for the diffusion of macromolecules. CA also has nucleocapsid-like chaperone activity, promoting primer tRNA(i)-Met annealing to the multipartite primer-binding site (PBS), dimerization of Ty1 RNA and initiation of reverse transcription (By similarity).</text>
</comment>
<comment type="function">
    <text evidence="1">The aspartyl protease (PR) mediates the proteolytic cleavages of the Gag and Gag-Pol polyproteins after assembly of the VLP.</text>
</comment>
<comment type="function">
    <text evidence="1">Reverse transcriptase/ribonuclease H (RT) is a multifunctional enzyme that catalyzes the conversion of the retro-elements RNA genome into dsDNA within the VLP. The enzyme displays a DNA polymerase activity that can copy either DNA or RNA templates, and a ribonuclease H (RNase H) activity that cleaves the RNA strand of RNA-DNA heteroduplexes during plus-strand synthesis and hydrolyzes RNA primers. The conversion leads to a linear dsDNA copy of the retrotransposon that includes long terminal repeats (LTRs) at both ends (By similarity).</text>
</comment>
<comment type="function">
    <text evidence="1">Integrase (IN) targets the VLP to the nucleus, where a subparticle preintegration complex (PIC) containing at least integrase and the newly synthesized dsDNA copy of the retrotransposon must transit the nuclear membrane. Once in the nucleus, integrase performs the integration of the dsDNA into the host genome (By similarity).</text>
</comment>
<comment type="catalytic activity">
    <reaction>
        <text>DNA(n) + a 2'-deoxyribonucleoside 5'-triphosphate = DNA(n+1) + diphosphate</text>
        <dbReference type="Rhea" id="RHEA:22508"/>
        <dbReference type="Rhea" id="RHEA-COMP:17339"/>
        <dbReference type="Rhea" id="RHEA-COMP:17340"/>
        <dbReference type="ChEBI" id="CHEBI:33019"/>
        <dbReference type="ChEBI" id="CHEBI:61560"/>
        <dbReference type="ChEBI" id="CHEBI:173112"/>
        <dbReference type="EC" id="2.7.7.49"/>
    </reaction>
</comment>
<comment type="catalytic activity">
    <reaction>
        <text>DNA(n) + a 2'-deoxyribonucleoside 5'-triphosphate = DNA(n+1) + diphosphate</text>
        <dbReference type="Rhea" id="RHEA:22508"/>
        <dbReference type="Rhea" id="RHEA-COMP:17339"/>
        <dbReference type="Rhea" id="RHEA-COMP:17340"/>
        <dbReference type="ChEBI" id="CHEBI:33019"/>
        <dbReference type="ChEBI" id="CHEBI:61560"/>
        <dbReference type="ChEBI" id="CHEBI:173112"/>
        <dbReference type="EC" id="2.7.7.7"/>
    </reaction>
</comment>
<comment type="catalytic activity">
    <reaction>
        <text>Endonucleolytic cleavage to 5'-phosphomonoester.</text>
        <dbReference type="EC" id="3.1.26.4"/>
    </reaction>
</comment>
<comment type="subunit">
    <text evidence="1">The capsid protein forms a homotrimer, from which the VLPs are assembled. The protease is a homodimer, whose active site consists of two apposed aspartic acid residues (By similarity).</text>
</comment>
<comment type="subcellular location">
    <subcellularLocation>
        <location>Cytoplasm</location>
    </subcellularLocation>
    <subcellularLocation>
        <location evidence="1">Nucleus</location>
    </subcellularLocation>
</comment>
<comment type="alternative products">
    <event type="ribosomal frameshifting"/>
    <isoform>
        <id>Q07793-1</id>
        <name>Transposon Ty1-DR4 Gag-Pol polyprotein</name>
        <sequence type="displayed"/>
    </isoform>
    <isoform>
        <id>O74302-1</id>
        <name>Transposon Ty1-DR4 Gag polyprotein</name>
        <sequence type="external"/>
    </isoform>
    <text evidence="1">The Gag-Pol polyprotein is generated by a +1 ribosomal frameshift. The ratio of Gag:Gag-Pol varies between 20:1 and 5:1 (By similarity).</text>
</comment>
<comment type="domain">
    <text evidence="1">The C-terminal RNA-binding region of CA is sufficient for all its nucleocapsid-like chaperone activities.</text>
</comment>
<comment type="domain">
    <text evidence="1">Integrase core domain contains the D-x(n)-D-x(35)-E motif, named for the phylogenetically conserved glutamic acid and aspartic acid residues and the invariant 35 amino acid spacing between the second and third acidic residues. Each acidic residue of the D,D(35)E motif is independently essential for the 3'-processing and strand transfer activities of purified integrase protein (By similarity).</text>
</comment>
<comment type="PTM">
    <text evidence="1">Initially, virus-like particles (VLPs) are composed of the structural unprocessed proteins Gag and Gag-Pol, and also contain the host initiator methionine tRNA (tRNA(i)-Met) which serves as a primer for minus-strand DNA synthesis, and a dimer of genomic Ty RNA. Processing of the polyproteins occurs within the particle and proceeds by an ordered pathway, called maturation. First, the protease (PR) is released by autocatalytic cleavage of the Gag-Pol polyprotein yielding capsid protein p45 and a Pol-p154 precursor protein. This cleavage is a prerequisite for subsequent processing of Pol-p154 at the remaining sites to release the mature structural and catalytic proteins. Maturation takes place prior to the RT reaction and is required to produce transposition-competent VLPs (By similarity).</text>
</comment>
<comment type="miscellaneous">
    <text>Retrotransposons are mobile genetic entities that are able to replicate via an RNA intermediate and a reverse transcription step. In contrast to retroviruses, retrotransposons are non-infectious, lack an envelope and remain intracellular. Ty1 retrotransposons belong to the copia elements (pseudoviridae).</text>
</comment>
<comment type="miscellaneous">
    <text>Transposon YDRCTy1-3 (YDRCTy1-3) contains a 425 bp deletion at position 1596, which truncates the ORF coding for protein TY1B when compared to other Ty1 elements. It is probably not functional.</text>
</comment>
<comment type="miscellaneous">
    <molecule>Isoform Transposon Ty1-DR4 Gag-Pol polyprotein</molecule>
    <text>Produced by +1 ribosomal frameshifting between codon Leu-435 and Gly-436 of the YDR261C-C ORF.</text>
</comment>
<proteinExistence type="inferred from homology"/>
<organism>
    <name type="scientific">Saccharomyces cerevisiae (strain ATCC 204508 / S288c)</name>
    <name type="common">Baker's yeast</name>
    <dbReference type="NCBI Taxonomy" id="559292"/>
    <lineage>
        <taxon>Eukaryota</taxon>
        <taxon>Fungi</taxon>
        <taxon>Dikarya</taxon>
        <taxon>Ascomycota</taxon>
        <taxon>Saccharomycotina</taxon>
        <taxon>Saccharomycetes</taxon>
        <taxon>Saccharomycetales</taxon>
        <taxon>Saccharomycetaceae</taxon>
        <taxon>Saccharomyces</taxon>
    </lineage>
</organism>